<comment type="function">
    <text evidence="1">Endonuclease that resolves Holliday junction intermediates in genetic recombination. Cleaves mobile four-strand junctions by introducing symmetrical nicks in paired strands. Promotes annealing of linear ssDNA with homologous dsDNA. Required for DNA repair, homologous recombination and chromosome segregation.</text>
</comment>
<comment type="catalytic activity">
    <reaction evidence="1">
        <text>Endonucleolytic cleavage at a junction such as a reciprocal single-stranded crossover between two homologous DNA duplexes (Holliday junction).</text>
        <dbReference type="EC" id="3.1.21.10"/>
    </reaction>
</comment>
<comment type="cofactor">
    <cofactor evidence="1">
        <name>Mg(2+)</name>
        <dbReference type="ChEBI" id="CHEBI:18420"/>
    </cofactor>
    <text evidence="1">Binds 1 Mg(2+) ion per subunit.</text>
</comment>
<comment type="subcellular location">
    <subcellularLocation>
        <location evidence="1">Cytoplasm</location>
    </subcellularLocation>
</comment>
<comment type="similarity">
    <text evidence="1">Belongs to the RecU family.</text>
</comment>
<reference key="1">
    <citation type="journal article" date="2010" name="Genome Biol.">
        <title>Structure and dynamics of the pan-genome of Streptococcus pneumoniae and closely related species.</title>
        <authorList>
            <person name="Donati C."/>
            <person name="Hiller N.L."/>
            <person name="Tettelin H."/>
            <person name="Muzzi A."/>
            <person name="Croucher N.J."/>
            <person name="Angiuoli S.V."/>
            <person name="Oggioni M."/>
            <person name="Dunning Hotopp J.C."/>
            <person name="Hu F.Z."/>
            <person name="Riley D.R."/>
            <person name="Covacci A."/>
            <person name="Mitchell T.J."/>
            <person name="Bentley S.D."/>
            <person name="Kilian M."/>
            <person name="Ehrlich G.D."/>
            <person name="Rappuoli R."/>
            <person name="Moxon E.R."/>
            <person name="Masignani V."/>
        </authorList>
    </citation>
    <scope>NUCLEOTIDE SEQUENCE [LARGE SCALE GENOMIC DNA]</scope>
    <source>
        <strain>70585</strain>
    </source>
</reference>
<feature type="chain" id="PRO_1000193442" description="Holliday junction resolvase RecU">
    <location>
        <begin position="1"/>
        <end position="198"/>
    </location>
</feature>
<feature type="region of interest" description="Disordered" evidence="2">
    <location>
        <begin position="1"/>
        <end position="22"/>
    </location>
</feature>
<feature type="compositionally biased region" description="Polar residues" evidence="2">
    <location>
        <begin position="11"/>
        <end position="22"/>
    </location>
</feature>
<feature type="binding site" evidence="1">
    <location>
        <position position="81"/>
    </location>
    <ligand>
        <name>Mg(2+)</name>
        <dbReference type="ChEBI" id="CHEBI:18420"/>
    </ligand>
</feature>
<feature type="binding site" evidence="1">
    <location>
        <position position="83"/>
    </location>
    <ligand>
        <name>Mg(2+)</name>
        <dbReference type="ChEBI" id="CHEBI:18420"/>
    </ligand>
</feature>
<feature type="binding site" evidence="1">
    <location>
        <position position="96"/>
    </location>
    <ligand>
        <name>Mg(2+)</name>
        <dbReference type="ChEBI" id="CHEBI:18420"/>
    </ligand>
</feature>
<feature type="binding site" evidence="1">
    <location>
        <position position="115"/>
    </location>
    <ligand>
        <name>Mg(2+)</name>
        <dbReference type="ChEBI" id="CHEBI:18420"/>
    </ligand>
</feature>
<feature type="site" description="Transition state stabilizer" evidence="1">
    <location>
        <position position="98"/>
    </location>
</feature>
<accession>C1CBF0</accession>
<protein>
    <recommendedName>
        <fullName evidence="1">Holliday junction resolvase RecU</fullName>
        <ecNumber evidence="1">3.1.21.10</ecNumber>
    </recommendedName>
    <alternativeName>
        <fullName evidence="1">Recombination protein U homolog</fullName>
    </alternativeName>
</protein>
<dbReference type="EC" id="3.1.21.10" evidence="1"/>
<dbReference type="EMBL" id="CP000918">
    <property type="protein sequence ID" value="ACO16490.1"/>
    <property type="molecule type" value="Genomic_DNA"/>
</dbReference>
<dbReference type="RefSeq" id="WP_000248787.1">
    <property type="nucleotide sequence ID" value="NC_012468.1"/>
</dbReference>
<dbReference type="SMR" id="C1CBF0"/>
<dbReference type="GeneID" id="45652167"/>
<dbReference type="KEGG" id="snm:SP70585_0441"/>
<dbReference type="HOGENOM" id="CLU_096340_0_0_9"/>
<dbReference type="Proteomes" id="UP000002211">
    <property type="component" value="Chromosome"/>
</dbReference>
<dbReference type="GO" id="GO:0005737">
    <property type="term" value="C:cytoplasm"/>
    <property type="evidence" value="ECO:0007669"/>
    <property type="project" value="UniProtKB-SubCell"/>
</dbReference>
<dbReference type="GO" id="GO:0004519">
    <property type="term" value="F:endonuclease activity"/>
    <property type="evidence" value="ECO:0007669"/>
    <property type="project" value="UniProtKB-UniRule"/>
</dbReference>
<dbReference type="GO" id="GO:0000287">
    <property type="term" value="F:magnesium ion binding"/>
    <property type="evidence" value="ECO:0007669"/>
    <property type="project" value="UniProtKB-UniRule"/>
</dbReference>
<dbReference type="GO" id="GO:0003676">
    <property type="term" value="F:nucleic acid binding"/>
    <property type="evidence" value="ECO:0007669"/>
    <property type="project" value="InterPro"/>
</dbReference>
<dbReference type="GO" id="GO:0007059">
    <property type="term" value="P:chromosome segregation"/>
    <property type="evidence" value="ECO:0007669"/>
    <property type="project" value="UniProtKB-UniRule"/>
</dbReference>
<dbReference type="GO" id="GO:0006310">
    <property type="term" value="P:DNA recombination"/>
    <property type="evidence" value="ECO:0007669"/>
    <property type="project" value="UniProtKB-UniRule"/>
</dbReference>
<dbReference type="GO" id="GO:0006281">
    <property type="term" value="P:DNA repair"/>
    <property type="evidence" value="ECO:0007669"/>
    <property type="project" value="UniProtKB-UniRule"/>
</dbReference>
<dbReference type="CDD" id="cd22354">
    <property type="entry name" value="RecU-like"/>
    <property type="match status" value="1"/>
</dbReference>
<dbReference type="Gene3D" id="3.40.1350.10">
    <property type="match status" value="1"/>
</dbReference>
<dbReference type="HAMAP" id="MF_00130">
    <property type="entry name" value="RecU"/>
    <property type="match status" value="1"/>
</dbReference>
<dbReference type="InterPro" id="IPR004612">
    <property type="entry name" value="Resolv_RecU"/>
</dbReference>
<dbReference type="InterPro" id="IPR011335">
    <property type="entry name" value="Restrct_endonuc-II-like"/>
</dbReference>
<dbReference type="InterPro" id="IPR011856">
    <property type="entry name" value="tRNA_endonuc-like_dom_sf"/>
</dbReference>
<dbReference type="NCBIfam" id="NF002580">
    <property type="entry name" value="PRK02234.1-1"/>
    <property type="match status" value="1"/>
</dbReference>
<dbReference type="NCBIfam" id="NF002584">
    <property type="entry name" value="PRK02234.1-5"/>
    <property type="match status" value="1"/>
</dbReference>
<dbReference type="NCBIfam" id="TIGR00648">
    <property type="entry name" value="recU"/>
    <property type="match status" value="1"/>
</dbReference>
<dbReference type="Pfam" id="PF03838">
    <property type="entry name" value="RecU"/>
    <property type="match status" value="1"/>
</dbReference>
<dbReference type="PIRSF" id="PIRSF037785">
    <property type="entry name" value="RecU"/>
    <property type="match status" value="1"/>
</dbReference>
<dbReference type="SUPFAM" id="SSF52980">
    <property type="entry name" value="Restriction endonuclease-like"/>
    <property type="match status" value="1"/>
</dbReference>
<keyword id="KW-0963">Cytoplasm</keyword>
<keyword id="KW-0227">DNA damage</keyword>
<keyword id="KW-0233">DNA recombination</keyword>
<keyword id="KW-0234">DNA repair</keyword>
<keyword id="KW-0255">Endonuclease</keyword>
<keyword id="KW-0378">Hydrolase</keyword>
<keyword id="KW-0460">Magnesium</keyword>
<keyword id="KW-0479">Metal-binding</keyword>
<keyword id="KW-0540">Nuclease</keyword>
<proteinExistence type="inferred from homology"/>
<sequence length="198" mass="23131">MVNYPHKVSSQKRQTSLSQPKNFANRGMSFEKMINATNDYYLSQGLAVIHKKPTPIQIVQVDYPQRSRAKIVEAYFRQASTTDYSGVYNGYYIDFEVKETKQKRAIPMKNFHPHQIQHMEQVLAQQGICFVLLHFSSQQETYLLPAFDLIRFYHQDKGQKSMPLEYIREYGYEIKAGAFPQIPYLNVIKEHLLGGKTR</sequence>
<organism>
    <name type="scientific">Streptococcus pneumoniae (strain 70585)</name>
    <dbReference type="NCBI Taxonomy" id="488221"/>
    <lineage>
        <taxon>Bacteria</taxon>
        <taxon>Bacillati</taxon>
        <taxon>Bacillota</taxon>
        <taxon>Bacilli</taxon>
        <taxon>Lactobacillales</taxon>
        <taxon>Streptococcaceae</taxon>
        <taxon>Streptococcus</taxon>
    </lineage>
</organism>
<name>RECU_STRP7</name>
<gene>
    <name evidence="1" type="primary">recU</name>
    <name type="ordered locus">SP70585_0441</name>
</gene>
<evidence type="ECO:0000255" key="1">
    <source>
        <dbReference type="HAMAP-Rule" id="MF_00130"/>
    </source>
</evidence>
<evidence type="ECO:0000256" key="2">
    <source>
        <dbReference type="SAM" id="MobiDB-lite"/>
    </source>
</evidence>